<accession>A4WEJ9</accession>
<evidence type="ECO:0000255" key="1">
    <source>
        <dbReference type="HAMAP-Rule" id="MF_01445"/>
    </source>
</evidence>
<feature type="chain" id="PRO_1000068572" description="tRNA N6-adenosine threonylcarbamoyltransferase">
    <location>
        <begin position="1"/>
        <end position="337"/>
    </location>
</feature>
<feature type="binding site" evidence="1">
    <location>
        <position position="111"/>
    </location>
    <ligand>
        <name>Fe cation</name>
        <dbReference type="ChEBI" id="CHEBI:24875"/>
    </ligand>
</feature>
<feature type="binding site" evidence="1">
    <location>
        <position position="115"/>
    </location>
    <ligand>
        <name>Fe cation</name>
        <dbReference type="ChEBI" id="CHEBI:24875"/>
    </ligand>
</feature>
<feature type="binding site" evidence="1">
    <location>
        <begin position="134"/>
        <end position="138"/>
    </location>
    <ligand>
        <name>substrate</name>
    </ligand>
</feature>
<feature type="binding site" evidence="1">
    <location>
        <position position="167"/>
    </location>
    <ligand>
        <name>substrate</name>
    </ligand>
</feature>
<feature type="binding site" evidence="1">
    <location>
        <position position="180"/>
    </location>
    <ligand>
        <name>substrate</name>
    </ligand>
</feature>
<feature type="binding site" evidence="1">
    <location>
        <position position="272"/>
    </location>
    <ligand>
        <name>substrate</name>
    </ligand>
</feature>
<feature type="binding site" evidence="1">
    <location>
        <position position="300"/>
    </location>
    <ligand>
        <name>Fe cation</name>
        <dbReference type="ChEBI" id="CHEBI:24875"/>
    </ligand>
</feature>
<name>TSAD_ENT38</name>
<reference key="1">
    <citation type="journal article" date="2010" name="PLoS Genet.">
        <title>Genome sequence of the plant growth promoting endophytic bacterium Enterobacter sp. 638.</title>
        <authorList>
            <person name="Taghavi S."/>
            <person name="van der Lelie D."/>
            <person name="Hoffman A."/>
            <person name="Zhang Y.B."/>
            <person name="Walla M.D."/>
            <person name="Vangronsveld J."/>
            <person name="Newman L."/>
            <person name="Monchy S."/>
        </authorList>
    </citation>
    <scope>NUCLEOTIDE SEQUENCE [LARGE SCALE GENOMIC DNA]</scope>
    <source>
        <strain>638</strain>
    </source>
</reference>
<sequence length="337" mass="36322">MRVLGIETSCDETGIAIYDDEKGLLANQLYSQVKLHADYGGVVPELASRDHVRKTVPLIQAALKESGLTAKDIDAVAYTAGPGLVGALLVGATIGRSLAFAWDVPAIPVHHMEGHLLAPMLEENPPEFPFVALLVSGGHTQLISVTGIGEYELLGESIDDAAGEAFDKTAKLLGLDYPGGPMLSKLASQGVEKRFVFPRPMTDRPGLDFSFSGLKTFAANTIRNNENDDQTRADIARAFEDAVVDTLMIKCKRALDQTGFTRLVMAGGVSANRTLRTRLEEMMQKRRGEVFYARPEFCTDNGAMIAYAGMVRVKGGATADLSVSVRPRWPLAELPAA</sequence>
<organism>
    <name type="scientific">Enterobacter sp. (strain 638)</name>
    <dbReference type="NCBI Taxonomy" id="399742"/>
    <lineage>
        <taxon>Bacteria</taxon>
        <taxon>Pseudomonadati</taxon>
        <taxon>Pseudomonadota</taxon>
        <taxon>Gammaproteobacteria</taxon>
        <taxon>Enterobacterales</taxon>
        <taxon>Enterobacteriaceae</taxon>
        <taxon>Enterobacter</taxon>
    </lineage>
</organism>
<comment type="function">
    <text evidence="1">Required for the formation of a threonylcarbamoyl group on adenosine at position 37 (t(6)A37) in tRNAs that read codons beginning with adenine. Is involved in the transfer of the threonylcarbamoyl moiety of threonylcarbamoyl-AMP (TC-AMP) to the N6 group of A37, together with TsaE and TsaB. TsaD likely plays a direct catalytic role in this reaction.</text>
</comment>
<comment type="catalytic activity">
    <reaction evidence="1">
        <text>L-threonylcarbamoyladenylate + adenosine(37) in tRNA = N(6)-L-threonylcarbamoyladenosine(37) in tRNA + AMP + H(+)</text>
        <dbReference type="Rhea" id="RHEA:37059"/>
        <dbReference type="Rhea" id="RHEA-COMP:10162"/>
        <dbReference type="Rhea" id="RHEA-COMP:10163"/>
        <dbReference type="ChEBI" id="CHEBI:15378"/>
        <dbReference type="ChEBI" id="CHEBI:73682"/>
        <dbReference type="ChEBI" id="CHEBI:74411"/>
        <dbReference type="ChEBI" id="CHEBI:74418"/>
        <dbReference type="ChEBI" id="CHEBI:456215"/>
        <dbReference type="EC" id="2.3.1.234"/>
    </reaction>
</comment>
<comment type="cofactor">
    <cofactor evidence="1">
        <name>Fe(2+)</name>
        <dbReference type="ChEBI" id="CHEBI:29033"/>
    </cofactor>
    <text evidence="1">Binds 1 Fe(2+) ion per subunit.</text>
</comment>
<comment type="subcellular location">
    <subcellularLocation>
        <location evidence="1">Cytoplasm</location>
    </subcellularLocation>
</comment>
<comment type="similarity">
    <text evidence="1">Belongs to the KAE1 / TsaD family.</text>
</comment>
<dbReference type="EC" id="2.3.1.234" evidence="1"/>
<dbReference type="EMBL" id="CP000653">
    <property type="protein sequence ID" value="ABP62129.1"/>
    <property type="molecule type" value="Genomic_DNA"/>
</dbReference>
<dbReference type="RefSeq" id="WP_015960457.1">
    <property type="nucleotide sequence ID" value="NC_009436.1"/>
</dbReference>
<dbReference type="SMR" id="A4WEJ9"/>
<dbReference type="STRING" id="399742.Ent638_3470"/>
<dbReference type="KEGG" id="ent:Ent638_3470"/>
<dbReference type="eggNOG" id="COG0533">
    <property type="taxonomic scope" value="Bacteria"/>
</dbReference>
<dbReference type="HOGENOM" id="CLU_023208_0_2_6"/>
<dbReference type="OrthoDB" id="9806197at2"/>
<dbReference type="Proteomes" id="UP000000230">
    <property type="component" value="Chromosome"/>
</dbReference>
<dbReference type="GO" id="GO:0005737">
    <property type="term" value="C:cytoplasm"/>
    <property type="evidence" value="ECO:0007669"/>
    <property type="project" value="UniProtKB-SubCell"/>
</dbReference>
<dbReference type="GO" id="GO:0005506">
    <property type="term" value="F:iron ion binding"/>
    <property type="evidence" value="ECO:0007669"/>
    <property type="project" value="UniProtKB-UniRule"/>
</dbReference>
<dbReference type="GO" id="GO:0061711">
    <property type="term" value="F:N(6)-L-threonylcarbamoyladenine synthase activity"/>
    <property type="evidence" value="ECO:0007669"/>
    <property type="project" value="UniProtKB-EC"/>
</dbReference>
<dbReference type="GO" id="GO:0002949">
    <property type="term" value="P:tRNA threonylcarbamoyladenosine modification"/>
    <property type="evidence" value="ECO:0007669"/>
    <property type="project" value="UniProtKB-UniRule"/>
</dbReference>
<dbReference type="CDD" id="cd24133">
    <property type="entry name" value="ASKHA_NBD_TsaD_bac"/>
    <property type="match status" value="1"/>
</dbReference>
<dbReference type="FunFam" id="3.30.420.40:FF:000031">
    <property type="entry name" value="tRNA N6-adenosine threonylcarbamoyltransferase"/>
    <property type="match status" value="1"/>
</dbReference>
<dbReference type="Gene3D" id="3.30.420.40">
    <property type="match status" value="2"/>
</dbReference>
<dbReference type="HAMAP" id="MF_01445">
    <property type="entry name" value="TsaD"/>
    <property type="match status" value="1"/>
</dbReference>
<dbReference type="InterPro" id="IPR043129">
    <property type="entry name" value="ATPase_NBD"/>
</dbReference>
<dbReference type="InterPro" id="IPR000905">
    <property type="entry name" value="Gcp-like_dom"/>
</dbReference>
<dbReference type="InterPro" id="IPR017861">
    <property type="entry name" value="KAE1/TsaD"/>
</dbReference>
<dbReference type="InterPro" id="IPR017860">
    <property type="entry name" value="Peptidase_M22_CS"/>
</dbReference>
<dbReference type="InterPro" id="IPR022450">
    <property type="entry name" value="TsaD"/>
</dbReference>
<dbReference type="NCBIfam" id="TIGR00329">
    <property type="entry name" value="gcp_kae1"/>
    <property type="match status" value="1"/>
</dbReference>
<dbReference type="NCBIfam" id="TIGR03723">
    <property type="entry name" value="T6A_TsaD_YgjD"/>
    <property type="match status" value="1"/>
</dbReference>
<dbReference type="PANTHER" id="PTHR11735">
    <property type="entry name" value="TRNA N6-ADENOSINE THREONYLCARBAMOYLTRANSFERASE"/>
    <property type="match status" value="1"/>
</dbReference>
<dbReference type="PANTHER" id="PTHR11735:SF6">
    <property type="entry name" value="TRNA N6-ADENOSINE THREONYLCARBAMOYLTRANSFERASE, MITOCHONDRIAL"/>
    <property type="match status" value="1"/>
</dbReference>
<dbReference type="Pfam" id="PF00814">
    <property type="entry name" value="TsaD"/>
    <property type="match status" value="1"/>
</dbReference>
<dbReference type="PRINTS" id="PR00789">
    <property type="entry name" value="OSIALOPTASE"/>
</dbReference>
<dbReference type="SUPFAM" id="SSF53067">
    <property type="entry name" value="Actin-like ATPase domain"/>
    <property type="match status" value="1"/>
</dbReference>
<dbReference type="PROSITE" id="PS01016">
    <property type="entry name" value="GLYCOPROTEASE"/>
    <property type="match status" value="1"/>
</dbReference>
<proteinExistence type="inferred from homology"/>
<gene>
    <name evidence="1" type="primary">tsaD</name>
    <name type="synonym">gcp</name>
    <name type="ordered locus">Ent638_3470</name>
</gene>
<protein>
    <recommendedName>
        <fullName evidence="1">tRNA N6-adenosine threonylcarbamoyltransferase</fullName>
        <ecNumber evidence="1">2.3.1.234</ecNumber>
    </recommendedName>
    <alternativeName>
        <fullName evidence="1">N6-L-threonylcarbamoyladenine synthase</fullName>
        <shortName evidence="1">t(6)A synthase</shortName>
    </alternativeName>
    <alternativeName>
        <fullName evidence="1">t(6)A37 threonylcarbamoyladenosine biosynthesis protein TsaD</fullName>
    </alternativeName>
    <alternativeName>
        <fullName evidence="1">tRNA threonylcarbamoyladenosine biosynthesis protein TsaD</fullName>
    </alternativeName>
</protein>
<keyword id="KW-0012">Acyltransferase</keyword>
<keyword id="KW-0963">Cytoplasm</keyword>
<keyword id="KW-0408">Iron</keyword>
<keyword id="KW-0479">Metal-binding</keyword>
<keyword id="KW-0808">Transferase</keyword>
<keyword id="KW-0819">tRNA processing</keyword>